<protein>
    <recommendedName>
        <fullName>DNA mismatch repair protein MutS</fullName>
    </recommendedName>
</protein>
<accession>O84797</accession>
<keyword id="KW-0067">ATP-binding</keyword>
<keyword id="KW-0227">DNA damage</keyword>
<keyword id="KW-0234">DNA repair</keyword>
<keyword id="KW-0238">DNA-binding</keyword>
<keyword id="KW-0547">Nucleotide-binding</keyword>
<keyword id="KW-1185">Reference proteome</keyword>
<name>MUTS_CHLTR</name>
<evidence type="ECO:0000250" key="1"/>
<evidence type="ECO:0000255" key="2"/>
<evidence type="ECO:0000269" key="3">
    <source>
    </source>
</evidence>
<evidence type="ECO:0000305" key="4"/>
<proteinExistence type="evidence at transcript level"/>
<feature type="chain" id="PRO_0000115087" description="DNA mismatch repair protein MutS">
    <location>
        <begin position="1"/>
        <end position="820"/>
    </location>
</feature>
<feature type="binding site" evidence="2">
    <location>
        <begin position="618"/>
        <end position="625"/>
    </location>
    <ligand>
        <name>ATP</name>
        <dbReference type="ChEBI" id="CHEBI:30616"/>
    </ligand>
</feature>
<sequence>MTHKLTPMMQQWHQCKEQAGDCLLLFRLGEFYEAFFDDALILAQNLDITLTQRQNVPMSGIPATCLDGYVDRLVSRGFKVAIAEQADNTEGSKGLVPRTINRLITPGALLSSSLLPEKANNYVLAINQVGSLYGLSCLDLSIGTFLVAEYDNTKDLIEAICRLAPTELLSHAKFYQKNEAVIKQLQQHLRITLSEYVSWAFEYQSATKKLYTCFQVSSLDGFGLQGLVPAINAAGALLSYIQDKLLLPISHLSIPKIYGQQKHLLIDKASQTNLELLSPIHGEHGKGSLLQVMERTSTPMGGRLLRNTLINPFYDLKEITLRQDSVEFFLQQADLRKILKRQLSCVRDLERLATKISTSLATPKDIGTLRDSLLSCTHIADNLQNCALPEFLENKFLIAPPLCSLIKTLSTELIQELPLKVSEGNIFANHYHPDLLRLRNIKENSKSWILEYQERIRNETGIKKLKVCYAQALGYYIEVASNLAPQLPKEFIRRQSRLHAERFTTQELQQFQDEVFSVEDKLQTLETKLFKELCFYIVEHRDLILKLSTAVADLDYVVSLAELAAEYDYRRPLVDHSDALSITKGMHPVALTLLDKGTFIPNDTVMHSAQTRMILLTGPNMAGKSTYIRQIALLVIMAQMGSFIPARSAHIGIVDKIFTRIGAGDNLSKGMSTFMVEMAETANILHNATDRSLVILDEIGRGTSTYDGLAIAQAVVEFLLFTDGKKAKTLFATHYKELTELEMHCQHVENFHAMVKENSGQPIFMYEIVKGHSKKSFGIHVAKLAGFPLSVVSRAQQILHQFEGPDLRPEPEKAQQLVMF</sequence>
<organism>
    <name type="scientific">Chlamydia trachomatis serovar D (strain ATCC VR-885 / DSM 19411 / UW-3/Cx)</name>
    <dbReference type="NCBI Taxonomy" id="272561"/>
    <lineage>
        <taxon>Bacteria</taxon>
        <taxon>Pseudomonadati</taxon>
        <taxon>Chlamydiota</taxon>
        <taxon>Chlamydiia</taxon>
        <taxon>Chlamydiales</taxon>
        <taxon>Chlamydiaceae</taxon>
        <taxon>Chlamydia/Chlamydophila group</taxon>
        <taxon>Chlamydia</taxon>
    </lineage>
</organism>
<comment type="function">
    <text evidence="1">This protein is involved in the repair of mismatches in DNA. It is possible that it carries out the mismatch recognition step. This protein has a weak ATPase activity (By similarity).</text>
</comment>
<comment type="induction">
    <text evidence="3">In infected human monocytes transcripts are present by day 1 post-infection and last for the 7 days of the experiment. In patients with confirmed synovial Chlamydia infections, 5/8 had transcripts. In infected human Hep-2 cells, transcripts are visible from 11-48 hours post-infection.</text>
</comment>
<comment type="similarity">
    <text evidence="4">Belongs to the DNA mismatch repair MutS family.</text>
</comment>
<gene>
    <name type="primary">mutS</name>
    <name type="ordered locus">CT_792</name>
</gene>
<dbReference type="EMBL" id="AE001273">
    <property type="protein sequence ID" value="AAC68387.1"/>
    <property type="molecule type" value="Genomic_DNA"/>
</dbReference>
<dbReference type="PIR" id="D71471">
    <property type="entry name" value="D71471"/>
</dbReference>
<dbReference type="RefSeq" id="NP_220311.1">
    <property type="nucleotide sequence ID" value="NC_000117.1"/>
</dbReference>
<dbReference type="RefSeq" id="WP_010725347.1">
    <property type="nucleotide sequence ID" value="NC_000117.1"/>
</dbReference>
<dbReference type="SMR" id="O84797"/>
<dbReference type="FunCoup" id="O84797">
    <property type="interactions" value="226"/>
</dbReference>
<dbReference type="STRING" id="272561.CT_792"/>
<dbReference type="EnsemblBacteria" id="AAC68387">
    <property type="protein sequence ID" value="AAC68387"/>
    <property type="gene ID" value="CT_792"/>
</dbReference>
<dbReference type="GeneID" id="884588"/>
<dbReference type="KEGG" id="ctr:CT_792"/>
<dbReference type="PATRIC" id="fig|272561.5.peg.871"/>
<dbReference type="HOGENOM" id="CLU_002472_4_0_0"/>
<dbReference type="InParanoid" id="O84797"/>
<dbReference type="OrthoDB" id="9802448at2"/>
<dbReference type="Proteomes" id="UP000000431">
    <property type="component" value="Chromosome"/>
</dbReference>
<dbReference type="GO" id="GO:0005829">
    <property type="term" value="C:cytosol"/>
    <property type="evidence" value="ECO:0000318"/>
    <property type="project" value="GO_Central"/>
</dbReference>
<dbReference type="GO" id="GO:0005524">
    <property type="term" value="F:ATP binding"/>
    <property type="evidence" value="ECO:0007669"/>
    <property type="project" value="UniProtKB-UniRule"/>
</dbReference>
<dbReference type="GO" id="GO:0140664">
    <property type="term" value="F:ATP-dependent DNA damage sensor activity"/>
    <property type="evidence" value="ECO:0007669"/>
    <property type="project" value="InterPro"/>
</dbReference>
<dbReference type="GO" id="GO:0003684">
    <property type="term" value="F:damaged DNA binding"/>
    <property type="evidence" value="ECO:0007669"/>
    <property type="project" value="UniProtKB-UniRule"/>
</dbReference>
<dbReference type="GO" id="GO:0030983">
    <property type="term" value="F:mismatched DNA binding"/>
    <property type="evidence" value="ECO:0000318"/>
    <property type="project" value="GO_Central"/>
</dbReference>
<dbReference type="GO" id="GO:0006298">
    <property type="term" value="P:mismatch repair"/>
    <property type="evidence" value="ECO:0000318"/>
    <property type="project" value="GO_Central"/>
</dbReference>
<dbReference type="CDD" id="cd03284">
    <property type="entry name" value="ABC_MutS1"/>
    <property type="match status" value="1"/>
</dbReference>
<dbReference type="FunFam" id="3.30.420.110:FF:000030">
    <property type="entry name" value="DNA mismatch repair protein MutS"/>
    <property type="match status" value="1"/>
</dbReference>
<dbReference type="FunFam" id="3.40.1170.10:FF:000016">
    <property type="entry name" value="DNA mismatch repair protein MutS"/>
    <property type="match status" value="1"/>
</dbReference>
<dbReference type="FunFam" id="3.40.50.300:FF:002842">
    <property type="entry name" value="DNA mismatch repair protein MutS"/>
    <property type="match status" value="1"/>
</dbReference>
<dbReference type="Gene3D" id="1.10.1420.10">
    <property type="match status" value="2"/>
</dbReference>
<dbReference type="Gene3D" id="3.40.1170.10">
    <property type="entry name" value="DNA repair protein MutS, domain I"/>
    <property type="match status" value="1"/>
</dbReference>
<dbReference type="Gene3D" id="3.30.420.110">
    <property type="entry name" value="MutS, connector domain"/>
    <property type="match status" value="1"/>
</dbReference>
<dbReference type="Gene3D" id="3.40.50.300">
    <property type="entry name" value="P-loop containing nucleotide triphosphate hydrolases"/>
    <property type="match status" value="1"/>
</dbReference>
<dbReference type="HAMAP" id="MF_00096">
    <property type="entry name" value="MutS"/>
    <property type="match status" value="1"/>
</dbReference>
<dbReference type="InterPro" id="IPR005748">
    <property type="entry name" value="DNA_mismatch_repair_MutS"/>
</dbReference>
<dbReference type="InterPro" id="IPR007695">
    <property type="entry name" value="DNA_mismatch_repair_MutS-lik_N"/>
</dbReference>
<dbReference type="InterPro" id="IPR017261">
    <property type="entry name" value="DNA_mismatch_repair_MutS/MSH"/>
</dbReference>
<dbReference type="InterPro" id="IPR000432">
    <property type="entry name" value="DNA_mismatch_repair_MutS_C"/>
</dbReference>
<dbReference type="InterPro" id="IPR007861">
    <property type="entry name" value="DNA_mismatch_repair_MutS_clamp"/>
</dbReference>
<dbReference type="InterPro" id="IPR007696">
    <property type="entry name" value="DNA_mismatch_repair_MutS_core"/>
</dbReference>
<dbReference type="InterPro" id="IPR016151">
    <property type="entry name" value="DNA_mismatch_repair_MutS_N"/>
</dbReference>
<dbReference type="InterPro" id="IPR036187">
    <property type="entry name" value="DNA_mismatch_repair_MutS_sf"/>
</dbReference>
<dbReference type="InterPro" id="IPR007860">
    <property type="entry name" value="DNA_mmatch_repair_MutS_con_dom"/>
</dbReference>
<dbReference type="InterPro" id="IPR045076">
    <property type="entry name" value="MutS"/>
</dbReference>
<dbReference type="InterPro" id="IPR036678">
    <property type="entry name" value="MutS_con_dom_sf"/>
</dbReference>
<dbReference type="InterPro" id="IPR027417">
    <property type="entry name" value="P-loop_NTPase"/>
</dbReference>
<dbReference type="NCBIfam" id="TIGR01070">
    <property type="entry name" value="mutS1"/>
    <property type="match status" value="1"/>
</dbReference>
<dbReference type="NCBIfam" id="NF003810">
    <property type="entry name" value="PRK05399.1"/>
    <property type="match status" value="1"/>
</dbReference>
<dbReference type="PANTHER" id="PTHR11361:SF34">
    <property type="entry name" value="DNA MISMATCH REPAIR PROTEIN MSH1, MITOCHONDRIAL"/>
    <property type="match status" value="1"/>
</dbReference>
<dbReference type="PANTHER" id="PTHR11361">
    <property type="entry name" value="DNA MISMATCH REPAIR PROTEIN MUTS FAMILY MEMBER"/>
    <property type="match status" value="1"/>
</dbReference>
<dbReference type="Pfam" id="PF01624">
    <property type="entry name" value="MutS_I"/>
    <property type="match status" value="1"/>
</dbReference>
<dbReference type="Pfam" id="PF05188">
    <property type="entry name" value="MutS_II"/>
    <property type="match status" value="1"/>
</dbReference>
<dbReference type="Pfam" id="PF05192">
    <property type="entry name" value="MutS_III"/>
    <property type="match status" value="1"/>
</dbReference>
<dbReference type="Pfam" id="PF05190">
    <property type="entry name" value="MutS_IV"/>
    <property type="match status" value="1"/>
</dbReference>
<dbReference type="Pfam" id="PF00488">
    <property type="entry name" value="MutS_V"/>
    <property type="match status" value="1"/>
</dbReference>
<dbReference type="PIRSF" id="PIRSF037677">
    <property type="entry name" value="DNA_mis_repair_Msh6"/>
    <property type="match status" value="1"/>
</dbReference>
<dbReference type="SMART" id="SM00534">
    <property type="entry name" value="MUTSac"/>
    <property type="match status" value="1"/>
</dbReference>
<dbReference type="SMART" id="SM00533">
    <property type="entry name" value="MUTSd"/>
    <property type="match status" value="1"/>
</dbReference>
<dbReference type="SUPFAM" id="SSF55271">
    <property type="entry name" value="DNA repair protein MutS, domain I"/>
    <property type="match status" value="1"/>
</dbReference>
<dbReference type="SUPFAM" id="SSF53150">
    <property type="entry name" value="DNA repair protein MutS, domain II"/>
    <property type="match status" value="1"/>
</dbReference>
<dbReference type="SUPFAM" id="SSF48334">
    <property type="entry name" value="DNA repair protein MutS, domain III"/>
    <property type="match status" value="1"/>
</dbReference>
<dbReference type="SUPFAM" id="SSF52540">
    <property type="entry name" value="P-loop containing nucleoside triphosphate hydrolases"/>
    <property type="match status" value="1"/>
</dbReference>
<dbReference type="PROSITE" id="PS00486">
    <property type="entry name" value="DNA_MISMATCH_REPAIR_2"/>
    <property type="match status" value="1"/>
</dbReference>
<reference key="1">
    <citation type="journal article" date="1998" name="Science">
        <title>Genome sequence of an obligate intracellular pathogen of humans: Chlamydia trachomatis.</title>
        <authorList>
            <person name="Stephens R.S."/>
            <person name="Kalman S."/>
            <person name="Lammel C.J."/>
            <person name="Fan J."/>
            <person name="Marathe R."/>
            <person name="Aravind L."/>
            <person name="Mitchell W.P."/>
            <person name="Olinger L."/>
            <person name="Tatusov R.L."/>
            <person name="Zhao Q."/>
            <person name="Koonin E.V."/>
            <person name="Davis R.W."/>
        </authorList>
    </citation>
    <scope>NUCLEOTIDE SEQUENCE [LARGE SCALE GENOMIC DNA]</scope>
    <source>
        <strain>ATCC VR-885 / DSM 19411 / UW-3/Cx</strain>
    </source>
</reference>
<reference key="2">
    <citation type="journal article" date="2001" name="Mol. Microbiol.">
        <title>Expression of Chlamydia trachomatis genes encoding products required for DNA synthesis and cell division during active versus persistent infection.</title>
        <authorList>
            <person name="Gerard H.C."/>
            <person name="Krausse-Opatz B."/>
            <person name="Wang Z."/>
            <person name="Rudy D."/>
            <person name="Rao J.P."/>
            <person name="Zeidler H."/>
            <person name="Schumacher H.R."/>
            <person name="Whittum-Hudson J.A."/>
            <person name="Koehler L."/>
            <person name="Hudson A.P."/>
        </authorList>
    </citation>
    <scope>INDUCTION</scope>
    <source>
        <strain>Serovar K</strain>
    </source>
</reference>